<feature type="chain" id="PRO_0000092914" description="Phosphate import ATP-binding protein PstB">
    <location>
        <begin position="1"/>
        <end position="273"/>
    </location>
</feature>
<feature type="domain" description="ABC transporter" evidence="1">
    <location>
        <begin position="19"/>
        <end position="258"/>
    </location>
</feature>
<feature type="binding site" evidence="1">
    <location>
        <begin position="51"/>
        <end position="58"/>
    </location>
    <ligand>
        <name>ATP</name>
        <dbReference type="ChEBI" id="CHEBI:30616"/>
    </ligand>
</feature>
<dbReference type="EC" id="7.3.2.1" evidence="1"/>
<dbReference type="EMBL" id="BX569692">
    <property type="protein sequence ID" value="CAE07787.1"/>
    <property type="molecule type" value="Genomic_DNA"/>
</dbReference>
<dbReference type="RefSeq" id="WP_011128136.1">
    <property type="nucleotide sequence ID" value="NC_005070.1"/>
</dbReference>
<dbReference type="SMR" id="Q7U6R4"/>
<dbReference type="STRING" id="84588.SYNW1272"/>
<dbReference type="KEGG" id="syw:SYNW1272"/>
<dbReference type="eggNOG" id="COG1117">
    <property type="taxonomic scope" value="Bacteria"/>
</dbReference>
<dbReference type="HOGENOM" id="CLU_000604_1_22_3"/>
<dbReference type="Proteomes" id="UP000001422">
    <property type="component" value="Chromosome"/>
</dbReference>
<dbReference type="GO" id="GO:0005886">
    <property type="term" value="C:plasma membrane"/>
    <property type="evidence" value="ECO:0007669"/>
    <property type="project" value="UniProtKB-SubCell"/>
</dbReference>
<dbReference type="GO" id="GO:0005524">
    <property type="term" value="F:ATP binding"/>
    <property type="evidence" value="ECO:0007669"/>
    <property type="project" value="UniProtKB-KW"/>
</dbReference>
<dbReference type="GO" id="GO:0016887">
    <property type="term" value="F:ATP hydrolysis activity"/>
    <property type="evidence" value="ECO:0007669"/>
    <property type="project" value="InterPro"/>
</dbReference>
<dbReference type="GO" id="GO:0015415">
    <property type="term" value="F:ATPase-coupled phosphate ion transmembrane transporter activity"/>
    <property type="evidence" value="ECO:0007669"/>
    <property type="project" value="UniProtKB-EC"/>
</dbReference>
<dbReference type="GO" id="GO:0035435">
    <property type="term" value="P:phosphate ion transmembrane transport"/>
    <property type="evidence" value="ECO:0007669"/>
    <property type="project" value="InterPro"/>
</dbReference>
<dbReference type="CDD" id="cd03260">
    <property type="entry name" value="ABC_PstB_phosphate_transporter"/>
    <property type="match status" value="1"/>
</dbReference>
<dbReference type="Gene3D" id="3.40.50.300">
    <property type="entry name" value="P-loop containing nucleotide triphosphate hydrolases"/>
    <property type="match status" value="1"/>
</dbReference>
<dbReference type="InterPro" id="IPR003593">
    <property type="entry name" value="AAA+_ATPase"/>
</dbReference>
<dbReference type="InterPro" id="IPR003439">
    <property type="entry name" value="ABC_transporter-like_ATP-bd"/>
</dbReference>
<dbReference type="InterPro" id="IPR017871">
    <property type="entry name" value="ABC_transporter-like_CS"/>
</dbReference>
<dbReference type="InterPro" id="IPR027417">
    <property type="entry name" value="P-loop_NTPase"/>
</dbReference>
<dbReference type="InterPro" id="IPR005670">
    <property type="entry name" value="PstB-like"/>
</dbReference>
<dbReference type="NCBIfam" id="TIGR00972">
    <property type="entry name" value="3a0107s01c2"/>
    <property type="match status" value="1"/>
</dbReference>
<dbReference type="PANTHER" id="PTHR43423">
    <property type="entry name" value="ABC TRANSPORTER I FAMILY MEMBER 17"/>
    <property type="match status" value="1"/>
</dbReference>
<dbReference type="PANTHER" id="PTHR43423:SF1">
    <property type="entry name" value="ABC TRANSPORTER I FAMILY MEMBER 17"/>
    <property type="match status" value="1"/>
</dbReference>
<dbReference type="Pfam" id="PF00005">
    <property type="entry name" value="ABC_tran"/>
    <property type="match status" value="1"/>
</dbReference>
<dbReference type="SMART" id="SM00382">
    <property type="entry name" value="AAA"/>
    <property type="match status" value="1"/>
</dbReference>
<dbReference type="SUPFAM" id="SSF52540">
    <property type="entry name" value="P-loop containing nucleoside triphosphate hydrolases"/>
    <property type="match status" value="1"/>
</dbReference>
<dbReference type="PROSITE" id="PS00211">
    <property type="entry name" value="ABC_TRANSPORTER_1"/>
    <property type="match status" value="1"/>
</dbReference>
<dbReference type="PROSITE" id="PS50893">
    <property type="entry name" value="ABC_TRANSPORTER_2"/>
    <property type="match status" value="1"/>
</dbReference>
<dbReference type="PROSITE" id="PS51238">
    <property type="entry name" value="PSTB"/>
    <property type="match status" value="1"/>
</dbReference>
<accession>Q7U6R4</accession>
<reference key="1">
    <citation type="journal article" date="2003" name="Nature">
        <title>The genome of a motile marine Synechococcus.</title>
        <authorList>
            <person name="Palenik B."/>
            <person name="Brahamsha B."/>
            <person name="Larimer F.W."/>
            <person name="Land M.L."/>
            <person name="Hauser L."/>
            <person name="Chain P."/>
            <person name="Lamerdin J.E."/>
            <person name="Regala W."/>
            <person name="Allen E.E."/>
            <person name="McCarren J."/>
            <person name="Paulsen I.T."/>
            <person name="Dufresne A."/>
            <person name="Partensky F."/>
            <person name="Webb E.A."/>
            <person name="Waterbury J."/>
        </authorList>
    </citation>
    <scope>NUCLEOTIDE SEQUENCE [LARGE SCALE GENOMIC DNA]</scope>
    <source>
        <strain>WH8102</strain>
    </source>
</reference>
<evidence type="ECO:0000255" key="1">
    <source>
        <dbReference type="HAMAP-Rule" id="MF_01702"/>
    </source>
</evidence>
<proteinExistence type="inferred from homology"/>
<comment type="function">
    <text evidence="1">Part of the ABC transporter complex PstSACB involved in phosphate import. Responsible for energy coupling to the transport system.</text>
</comment>
<comment type="catalytic activity">
    <reaction evidence="1">
        <text>phosphate(out) + ATP + H2O = ADP + 2 phosphate(in) + H(+)</text>
        <dbReference type="Rhea" id="RHEA:24440"/>
        <dbReference type="ChEBI" id="CHEBI:15377"/>
        <dbReference type="ChEBI" id="CHEBI:15378"/>
        <dbReference type="ChEBI" id="CHEBI:30616"/>
        <dbReference type="ChEBI" id="CHEBI:43474"/>
        <dbReference type="ChEBI" id="CHEBI:456216"/>
        <dbReference type="EC" id="7.3.2.1"/>
    </reaction>
</comment>
<comment type="subunit">
    <text evidence="1">The complex is composed of two ATP-binding proteins (PstB), two transmembrane proteins (PstC and PstA) and a solute-binding protein (PstS).</text>
</comment>
<comment type="subcellular location">
    <subcellularLocation>
        <location evidence="1">Cell inner membrane</location>
        <topology evidence="1">Peripheral membrane protein</topology>
    </subcellularLocation>
</comment>
<comment type="similarity">
    <text evidence="1">Belongs to the ABC transporter superfamily. Phosphate importer (TC 3.A.1.7) family.</text>
</comment>
<keyword id="KW-0067">ATP-binding</keyword>
<keyword id="KW-0997">Cell inner membrane</keyword>
<keyword id="KW-1003">Cell membrane</keyword>
<keyword id="KW-0472">Membrane</keyword>
<keyword id="KW-0547">Nucleotide-binding</keyword>
<keyword id="KW-0592">Phosphate transport</keyword>
<keyword id="KW-1278">Translocase</keyword>
<keyword id="KW-0813">Transport</keyword>
<organism>
    <name type="scientific">Parasynechococcus marenigrum (strain WH8102)</name>
    <dbReference type="NCBI Taxonomy" id="84588"/>
    <lineage>
        <taxon>Bacteria</taxon>
        <taxon>Bacillati</taxon>
        <taxon>Cyanobacteriota</taxon>
        <taxon>Cyanophyceae</taxon>
        <taxon>Synechococcales</taxon>
        <taxon>Prochlorococcaceae</taxon>
        <taxon>Parasynechococcus</taxon>
        <taxon>Parasynechococcus marenigrum</taxon>
    </lineage>
</organism>
<sequence length="273" mass="30172">MTTSQLQTEQHQVSDDTAISIQNVTISYGSYEAVKNVYCDVPRGKVTAFIGPSGCGKSTVLRALNRMNDLIEGCSLKGRVLFDGVDLYGASVDPVEVRRRIGMVFQQPNPFPKSIYENIAFGARINGFTGDMDELVERSLRQAAVWDECKDKLNESGYSLSGGQQQRLCIARTIAIQPEVILMDEPCSALDPISTLKIEETMHELKKSFTIVIVTHNMQQAVRVSDMTAFYNAEAVEGGSGKVGYLVEFNETEKIFNSPQQQATQDYVSGRFG</sequence>
<gene>
    <name evidence="1" type="primary">pstB</name>
    <name type="ordered locus">SYNW1272</name>
</gene>
<protein>
    <recommendedName>
        <fullName evidence="1">Phosphate import ATP-binding protein PstB</fullName>
        <ecNumber evidence="1">7.3.2.1</ecNumber>
    </recommendedName>
    <alternativeName>
        <fullName evidence="1">ABC phosphate transporter</fullName>
    </alternativeName>
    <alternativeName>
        <fullName evidence="1">Phosphate-transporting ATPase</fullName>
    </alternativeName>
</protein>
<name>PSTB_PARMW</name>